<name>LPXH_VIBC3</name>
<organism>
    <name type="scientific">Vibrio cholerae serotype O1 (strain ATCC 39541 / Classical Ogawa 395 / O395)</name>
    <dbReference type="NCBI Taxonomy" id="345073"/>
    <lineage>
        <taxon>Bacteria</taxon>
        <taxon>Pseudomonadati</taxon>
        <taxon>Pseudomonadota</taxon>
        <taxon>Gammaproteobacteria</taxon>
        <taxon>Vibrionales</taxon>
        <taxon>Vibrionaceae</taxon>
        <taxon>Vibrio</taxon>
    </lineage>
</organism>
<sequence length="246" mass="28390">MHTLFISDLHLSPKHPDITASFIQFMREEAIKADALYVLGDLFDFWIGDDDPTTFAEQIKSEFRQLTQQGVPCYFTKGNRDFLVGKRFAQQTGVQLLPDEAVIDLYGQKAVVLHGDTLCTQDTRYLEFRAKVHQPWLQRLFGLLPFALKQKLVRKIQSDIRDDKQHKSMMIMDVTPSEVIAVMHRYNVDLMIHGHTHRPAIHSIQTDDQTLKTRIVLGDWYSQSSILVYSKLTGYSLLSRPLINIE</sequence>
<proteinExistence type="inferred from homology"/>
<feature type="chain" id="PRO_1000072579" description="UDP-2,3-diacylglucosamine hydrolase">
    <location>
        <begin position="1"/>
        <end position="246"/>
    </location>
</feature>
<feature type="binding site" evidence="1">
    <location>
        <position position="8"/>
    </location>
    <ligand>
        <name>Mn(2+)</name>
        <dbReference type="ChEBI" id="CHEBI:29035"/>
        <label>1</label>
    </ligand>
</feature>
<feature type="binding site" evidence="1">
    <location>
        <position position="10"/>
    </location>
    <ligand>
        <name>Mn(2+)</name>
        <dbReference type="ChEBI" id="CHEBI:29035"/>
        <label>1</label>
    </ligand>
</feature>
<feature type="binding site" evidence="1">
    <location>
        <position position="41"/>
    </location>
    <ligand>
        <name>Mn(2+)</name>
        <dbReference type="ChEBI" id="CHEBI:29035"/>
        <label>1</label>
    </ligand>
</feature>
<feature type="binding site" evidence="1">
    <location>
        <position position="41"/>
    </location>
    <ligand>
        <name>Mn(2+)</name>
        <dbReference type="ChEBI" id="CHEBI:29035"/>
        <label>2</label>
    </ligand>
</feature>
<feature type="binding site" evidence="1">
    <location>
        <begin position="79"/>
        <end position="80"/>
    </location>
    <ligand>
        <name>substrate</name>
    </ligand>
</feature>
<feature type="binding site" evidence="1">
    <location>
        <position position="79"/>
    </location>
    <ligand>
        <name>Mn(2+)</name>
        <dbReference type="ChEBI" id="CHEBI:29035"/>
        <label>2</label>
    </ligand>
</feature>
<feature type="binding site" evidence="1">
    <location>
        <position position="114"/>
    </location>
    <ligand>
        <name>Mn(2+)</name>
        <dbReference type="ChEBI" id="CHEBI:29035"/>
        <label>2</label>
    </ligand>
</feature>
<feature type="binding site" evidence="1">
    <location>
        <position position="122"/>
    </location>
    <ligand>
        <name>substrate</name>
    </ligand>
</feature>
<feature type="binding site" evidence="1">
    <location>
        <position position="164"/>
    </location>
    <ligand>
        <name>substrate</name>
    </ligand>
</feature>
<feature type="binding site" evidence="1">
    <location>
        <position position="167"/>
    </location>
    <ligand>
        <name>substrate</name>
    </ligand>
</feature>
<feature type="binding site" evidence="1">
    <location>
        <position position="195"/>
    </location>
    <ligand>
        <name>Mn(2+)</name>
        <dbReference type="ChEBI" id="CHEBI:29035"/>
        <label>2</label>
    </ligand>
</feature>
<feature type="binding site" evidence="1">
    <location>
        <position position="195"/>
    </location>
    <ligand>
        <name>substrate</name>
    </ligand>
</feature>
<feature type="binding site" evidence="1">
    <location>
        <position position="197"/>
    </location>
    <ligand>
        <name>Mn(2+)</name>
        <dbReference type="ChEBI" id="CHEBI:29035"/>
        <label>1</label>
    </ligand>
</feature>
<gene>
    <name evidence="1" type="primary">lpxH</name>
    <name type="ordered locus">VC0395_A1441</name>
    <name type="ordered locus">VC395_1965</name>
</gene>
<evidence type="ECO:0000255" key="1">
    <source>
        <dbReference type="HAMAP-Rule" id="MF_00575"/>
    </source>
</evidence>
<reference key="1">
    <citation type="submission" date="2007-03" db="EMBL/GenBank/DDBJ databases">
        <authorList>
            <person name="Heidelberg J."/>
        </authorList>
    </citation>
    <scope>NUCLEOTIDE SEQUENCE [LARGE SCALE GENOMIC DNA]</scope>
    <source>
        <strain>ATCC 39541 / Classical Ogawa 395 / O395</strain>
    </source>
</reference>
<reference key="2">
    <citation type="journal article" date="2008" name="PLoS ONE">
        <title>A recalibrated molecular clock and independent origins for the cholera pandemic clones.</title>
        <authorList>
            <person name="Feng L."/>
            <person name="Reeves P.R."/>
            <person name="Lan R."/>
            <person name="Ren Y."/>
            <person name="Gao C."/>
            <person name="Zhou Z."/>
            <person name="Ren Y."/>
            <person name="Cheng J."/>
            <person name="Wang W."/>
            <person name="Wang J."/>
            <person name="Qian W."/>
            <person name="Li D."/>
            <person name="Wang L."/>
        </authorList>
    </citation>
    <scope>NUCLEOTIDE SEQUENCE [LARGE SCALE GENOMIC DNA]</scope>
    <source>
        <strain>ATCC 39541 / Classical Ogawa 395 / O395</strain>
    </source>
</reference>
<dbReference type="EC" id="3.6.1.54" evidence="1"/>
<dbReference type="EMBL" id="CP000627">
    <property type="protein sequence ID" value="ABQ21332.1"/>
    <property type="molecule type" value="Genomic_DNA"/>
</dbReference>
<dbReference type="EMBL" id="CP001235">
    <property type="protein sequence ID" value="ACP09958.1"/>
    <property type="molecule type" value="Genomic_DNA"/>
</dbReference>
<dbReference type="RefSeq" id="WP_000557000.1">
    <property type="nucleotide sequence ID" value="NZ_JAACZH010000001.1"/>
</dbReference>
<dbReference type="SMR" id="A5F743"/>
<dbReference type="KEGG" id="vco:VC0395_A1441"/>
<dbReference type="KEGG" id="vcr:VC395_1965"/>
<dbReference type="PATRIC" id="fig|345073.21.peg.1897"/>
<dbReference type="eggNOG" id="COG2908">
    <property type="taxonomic scope" value="Bacteria"/>
</dbReference>
<dbReference type="HOGENOM" id="CLU_074586_0_0_6"/>
<dbReference type="OrthoDB" id="9783283at2"/>
<dbReference type="UniPathway" id="UPA00359">
    <property type="reaction ID" value="UER00480"/>
</dbReference>
<dbReference type="Proteomes" id="UP000000249">
    <property type="component" value="Chromosome 2"/>
</dbReference>
<dbReference type="GO" id="GO:0005737">
    <property type="term" value="C:cytoplasm"/>
    <property type="evidence" value="ECO:0007669"/>
    <property type="project" value="InterPro"/>
</dbReference>
<dbReference type="GO" id="GO:0019897">
    <property type="term" value="C:extrinsic component of plasma membrane"/>
    <property type="evidence" value="ECO:0007669"/>
    <property type="project" value="UniProtKB-UniRule"/>
</dbReference>
<dbReference type="GO" id="GO:0030145">
    <property type="term" value="F:manganese ion binding"/>
    <property type="evidence" value="ECO:0007669"/>
    <property type="project" value="UniProtKB-UniRule"/>
</dbReference>
<dbReference type="GO" id="GO:0008758">
    <property type="term" value="F:UDP-2,3-diacylglucosamine hydrolase activity"/>
    <property type="evidence" value="ECO:0007669"/>
    <property type="project" value="UniProtKB-UniRule"/>
</dbReference>
<dbReference type="GO" id="GO:0009245">
    <property type="term" value="P:lipid A biosynthetic process"/>
    <property type="evidence" value="ECO:0007669"/>
    <property type="project" value="UniProtKB-UniRule"/>
</dbReference>
<dbReference type="CDD" id="cd07398">
    <property type="entry name" value="MPP_YbbF-LpxH"/>
    <property type="match status" value="1"/>
</dbReference>
<dbReference type="FunFam" id="3.60.21.10:FF:000074">
    <property type="entry name" value="UDP-2,3-diacylglucosamine hydrolase"/>
    <property type="match status" value="1"/>
</dbReference>
<dbReference type="Gene3D" id="3.60.21.10">
    <property type="match status" value="1"/>
</dbReference>
<dbReference type="HAMAP" id="MF_00575">
    <property type="entry name" value="LpxH"/>
    <property type="match status" value="1"/>
</dbReference>
<dbReference type="InterPro" id="IPR004843">
    <property type="entry name" value="Calcineurin-like_PHP_ApaH"/>
</dbReference>
<dbReference type="InterPro" id="IPR043461">
    <property type="entry name" value="LpxH-like"/>
</dbReference>
<dbReference type="InterPro" id="IPR029052">
    <property type="entry name" value="Metallo-depent_PP-like"/>
</dbReference>
<dbReference type="InterPro" id="IPR010138">
    <property type="entry name" value="UDP-diacylglucosamine_Hdrlase"/>
</dbReference>
<dbReference type="NCBIfam" id="TIGR01854">
    <property type="entry name" value="lipid_A_lpxH"/>
    <property type="match status" value="1"/>
</dbReference>
<dbReference type="NCBIfam" id="NF003743">
    <property type="entry name" value="PRK05340.1"/>
    <property type="match status" value="1"/>
</dbReference>
<dbReference type="PANTHER" id="PTHR34990:SF1">
    <property type="entry name" value="UDP-2,3-DIACYLGLUCOSAMINE HYDROLASE"/>
    <property type="match status" value="1"/>
</dbReference>
<dbReference type="PANTHER" id="PTHR34990">
    <property type="entry name" value="UDP-2,3-DIACYLGLUCOSAMINE HYDROLASE-RELATED"/>
    <property type="match status" value="1"/>
</dbReference>
<dbReference type="Pfam" id="PF00149">
    <property type="entry name" value="Metallophos"/>
    <property type="match status" value="1"/>
</dbReference>
<dbReference type="SUPFAM" id="SSF56300">
    <property type="entry name" value="Metallo-dependent phosphatases"/>
    <property type="match status" value="1"/>
</dbReference>
<protein>
    <recommendedName>
        <fullName evidence="1">UDP-2,3-diacylglucosamine hydrolase</fullName>
        <ecNumber evidence="1">3.6.1.54</ecNumber>
    </recommendedName>
    <alternativeName>
        <fullName evidence="1">UDP-2,3-diacylglucosamine diphosphatase</fullName>
    </alternativeName>
</protein>
<comment type="function">
    <text evidence="1">Hydrolyzes the pyrophosphate bond of UDP-2,3-diacylglucosamine to yield 2,3-diacylglucosamine 1-phosphate (lipid X) and UMP by catalyzing the attack of water at the alpha-P atom. Involved in the biosynthesis of lipid A, a phosphorylated glycolipid that anchors the lipopolysaccharide to the outer membrane of the cell.</text>
</comment>
<comment type="catalytic activity">
    <reaction evidence="1">
        <text>UDP-2-N,3-O-bis[(3R)-3-hydroxytetradecanoyl]-alpha-D-glucosamine + H2O = 2-N,3-O-bis[(3R)-3-hydroxytetradecanoyl]-alpha-D-glucosaminyl 1-phosphate + UMP + 2 H(+)</text>
        <dbReference type="Rhea" id="RHEA:25213"/>
        <dbReference type="ChEBI" id="CHEBI:15377"/>
        <dbReference type="ChEBI" id="CHEBI:15378"/>
        <dbReference type="ChEBI" id="CHEBI:57865"/>
        <dbReference type="ChEBI" id="CHEBI:57957"/>
        <dbReference type="ChEBI" id="CHEBI:78847"/>
        <dbReference type="EC" id="3.6.1.54"/>
    </reaction>
</comment>
<comment type="cofactor">
    <cofactor evidence="1">
        <name>Mn(2+)</name>
        <dbReference type="ChEBI" id="CHEBI:29035"/>
    </cofactor>
    <text evidence="1">Binds 2 Mn(2+) ions per subunit in a binuclear metal center.</text>
</comment>
<comment type="pathway">
    <text evidence="1">Glycolipid biosynthesis; lipid IV(A) biosynthesis; lipid IV(A) from (3R)-3-hydroxytetradecanoyl-[acyl-carrier-protein] and UDP-N-acetyl-alpha-D-glucosamine: step 4/6.</text>
</comment>
<comment type="subcellular location">
    <subcellularLocation>
        <location evidence="1">Cell inner membrane</location>
        <topology evidence="1">Peripheral membrane protein</topology>
        <orientation evidence="1">Cytoplasmic side</orientation>
    </subcellularLocation>
</comment>
<comment type="similarity">
    <text evidence="1">Belongs to the LpxH family.</text>
</comment>
<accession>A5F743</accession>
<accession>C3M1P2</accession>
<keyword id="KW-0997">Cell inner membrane</keyword>
<keyword id="KW-1003">Cell membrane</keyword>
<keyword id="KW-0378">Hydrolase</keyword>
<keyword id="KW-0441">Lipid A biosynthesis</keyword>
<keyword id="KW-0444">Lipid biosynthesis</keyword>
<keyword id="KW-0443">Lipid metabolism</keyword>
<keyword id="KW-0464">Manganese</keyword>
<keyword id="KW-0472">Membrane</keyword>
<keyword id="KW-0479">Metal-binding</keyword>